<keyword id="KW-0032">Aminotransferase</keyword>
<keyword id="KW-0663">Pyridoxal phosphate</keyword>
<keyword id="KW-1185">Reference proteome</keyword>
<keyword id="KW-0808">Transferase</keyword>
<evidence type="ECO:0000255" key="1">
    <source>
        <dbReference type="HAMAP-Rule" id="MF_01513"/>
    </source>
</evidence>
<gene>
    <name evidence="1" type="primary">pat</name>
    <name type="synonym">hisC2</name>
    <name type="ordered locus">MAP_0252c</name>
</gene>
<reference key="1">
    <citation type="journal article" date="2005" name="Proc. Natl. Acad. Sci. U.S.A.">
        <title>The complete genome sequence of Mycobacterium avium subspecies paratuberculosis.</title>
        <authorList>
            <person name="Li L."/>
            <person name="Bannantine J.P."/>
            <person name="Zhang Q."/>
            <person name="Amonsin A."/>
            <person name="May B.J."/>
            <person name="Alt D."/>
            <person name="Banerji N."/>
            <person name="Kanjilal S."/>
            <person name="Kapur V."/>
        </authorList>
    </citation>
    <scope>NUCLEOTIDE SEQUENCE [LARGE SCALE GENOMIC DNA]</scope>
    <source>
        <strain>ATCC BAA-968 / K-10</strain>
    </source>
</reference>
<feature type="chain" id="PRO_0000153516" description="Aromatic amino acid aminotransferase">
    <location>
        <begin position="1"/>
        <end position="355"/>
    </location>
</feature>
<feature type="modified residue" description="N6-(pyridoxal phosphate)lysine" evidence="1">
    <location>
        <position position="217"/>
    </location>
</feature>
<accession>P61005</accession>
<name>PATR_MYCPA</name>
<comment type="function">
    <text evidence="1">Aminotransferase that catalyzes the conversion of aromatic amino acids and 2-oxoglutarate into corresponding aromatic oxo acids and L-glutamate.</text>
</comment>
<comment type="catalytic activity">
    <reaction evidence="1">
        <text>an aromatic L-alpha-amino acid + 2-oxoglutarate = an aromatic oxo-acid + L-glutamate</text>
        <dbReference type="Rhea" id="RHEA:17533"/>
        <dbReference type="ChEBI" id="CHEBI:16810"/>
        <dbReference type="ChEBI" id="CHEBI:29985"/>
        <dbReference type="ChEBI" id="CHEBI:73309"/>
        <dbReference type="ChEBI" id="CHEBI:84824"/>
        <dbReference type="EC" id="2.6.1.57"/>
    </reaction>
</comment>
<comment type="cofactor">
    <cofactor evidence="1">
        <name>pyridoxal 5'-phosphate</name>
        <dbReference type="ChEBI" id="CHEBI:597326"/>
    </cofactor>
</comment>
<comment type="subunit">
    <text evidence="1">Homodimer.</text>
</comment>
<comment type="similarity">
    <text evidence="1">Belongs to the class-II pyridoxal-phosphate-dependent aminotransferase family.</text>
</comment>
<protein>
    <recommendedName>
        <fullName evidence="1">Aromatic amino acid aminotransferase</fullName>
        <shortName evidence="1">ArAT</shortName>
        <ecNumber evidence="1">2.6.1.57</ecNumber>
    </recommendedName>
</protein>
<sequence>MTARLRPELAGLPVYVPGKNVPGSIKLASNETVYGPLPSVHAAIERAVAVVNRYPDNACVDLKAALAMHLGSDVAPEQIAVGSGSVTLCQQLVQITSAAGDEVMMGWRSFECYLPIVQVAGAIAVKVPLREHTYDLDAMLAAITDRTRLIFVCNPNNPTSTVVDPDALVRFVDAVPADILIAIDEAYVEYIRDGLLPNSLELALSRSNVVVLRTFSKAYGLAGLRVGYAIGHPELITALDKVVMPFAVTNVAQAAAIASLEASGELMARTDALVAERTRVSTALRDAGFELPPSQANFLWLPLGSRTEDFVQEAANARLVVRPFASEGVRVTIGAPAENDALLQFACDWIARTER</sequence>
<organism>
    <name type="scientific">Mycolicibacterium paratuberculosis (strain ATCC BAA-968 / K-10)</name>
    <name type="common">Mycobacterium paratuberculosis</name>
    <dbReference type="NCBI Taxonomy" id="262316"/>
    <lineage>
        <taxon>Bacteria</taxon>
        <taxon>Bacillati</taxon>
        <taxon>Actinomycetota</taxon>
        <taxon>Actinomycetes</taxon>
        <taxon>Mycobacteriales</taxon>
        <taxon>Mycobacteriaceae</taxon>
        <taxon>Mycobacterium</taxon>
        <taxon>Mycobacterium avium complex (MAC)</taxon>
    </lineage>
</organism>
<dbReference type="EC" id="2.6.1.57" evidence="1"/>
<dbReference type="EMBL" id="AE016958">
    <property type="protein sequence ID" value="AAS02569.1"/>
    <property type="molecule type" value="Genomic_DNA"/>
</dbReference>
<dbReference type="SMR" id="P61005"/>
<dbReference type="STRING" id="262316.MAP_0252c"/>
<dbReference type="KEGG" id="mpa:MAP_0252c"/>
<dbReference type="eggNOG" id="COG0079">
    <property type="taxonomic scope" value="Bacteria"/>
</dbReference>
<dbReference type="HOGENOM" id="CLU_017584_3_3_11"/>
<dbReference type="Proteomes" id="UP000000580">
    <property type="component" value="Chromosome"/>
</dbReference>
<dbReference type="GO" id="GO:0008793">
    <property type="term" value="F:aromatic-amino-acid transaminase activity"/>
    <property type="evidence" value="ECO:0007669"/>
    <property type="project" value="UniProtKB-UniRule"/>
</dbReference>
<dbReference type="GO" id="GO:0004400">
    <property type="term" value="F:histidinol-phosphate transaminase activity"/>
    <property type="evidence" value="ECO:0007669"/>
    <property type="project" value="InterPro"/>
</dbReference>
<dbReference type="GO" id="GO:0030170">
    <property type="term" value="F:pyridoxal phosphate binding"/>
    <property type="evidence" value="ECO:0007669"/>
    <property type="project" value="UniProtKB-UniRule"/>
</dbReference>
<dbReference type="GO" id="GO:0000105">
    <property type="term" value="P:L-histidine biosynthetic process"/>
    <property type="evidence" value="ECO:0007669"/>
    <property type="project" value="InterPro"/>
</dbReference>
<dbReference type="CDD" id="cd00609">
    <property type="entry name" value="AAT_like"/>
    <property type="match status" value="1"/>
</dbReference>
<dbReference type="Gene3D" id="3.90.1150.10">
    <property type="entry name" value="Aspartate Aminotransferase, domain 1"/>
    <property type="match status" value="1"/>
</dbReference>
<dbReference type="Gene3D" id="3.40.640.10">
    <property type="entry name" value="Type I PLP-dependent aspartate aminotransferase-like (Major domain)"/>
    <property type="match status" value="1"/>
</dbReference>
<dbReference type="HAMAP" id="MF_01023">
    <property type="entry name" value="HisC_aminotrans_2"/>
    <property type="match status" value="1"/>
</dbReference>
<dbReference type="HAMAP" id="MF_01513">
    <property type="entry name" value="Phe_aminotrans_2"/>
    <property type="match status" value="1"/>
</dbReference>
<dbReference type="InterPro" id="IPR001917">
    <property type="entry name" value="Aminotrans_II_pyridoxalP_BS"/>
</dbReference>
<dbReference type="InterPro" id="IPR004839">
    <property type="entry name" value="Aminotransferase_I/II_large"/>
</dbReference>
<dbReference type="InterPro" id="IPR024892">
    <property type="entry name" value="ArAT"/>
</dbReference>
<dbReference type="InterPro" id="IPR005861">
    <property type="entry name" value="HisP_aminotrans"/>
</dbReference>
<dbReference type="InterPro" id="IPR050106">
    <property type="entry name" value="HistidinolP_aminotransfase"/>
</dbReference>
<dbReference type="InterPro" id="IPR015424">
    <property type="entry name" value="PyrdxlP-dep_Trfase"/>
</dbReference>
<dbReference type="InterPro" id="IPR015421">
    <property type="entry name" value="PyrdxlP-dep_Trfase_major"/>
</dbReference>
<dbReference type="InterPro" id="IPR015422">
    <property type="entry name" value="PyrdxlP-dep_Trfase_small"/>
</dbReference>
<dbReference type="NCBIfam" id="TIGR01141">
    <property type="entry name" value="hisC"/>
    <property type="match status" value="1"/>
</dbReference>
<dbReference type="NCBIfam" id="NF002878">
    <property type="entry name" value="PRK03321.1"/>
    <property type="match status" value="1"/>
</dbReference>
<dbReference type="PANTHER" id="PTHR43643:SF3">
    <property type="entry name" value="HISTIDINOL-PHOSPHATE AMINOTRANSFERASE"/>
    <property type="match status" value="1"/>
</dbReference>
<dbReference type="PANTHER" id="PTHR43643">
    <property type="entry name" value="HISTIDINOL-PHOSPHATE AMINOTRANSFERASE 2"/>
    <property type="match status" value="1"/>
</dbReference>
<dbReference type="Pfam" id="PF00155">
    <property type="entry name" value="Aminotran_1_2"/>
    <property type="match status" value="1"/>
</dbReference>
<dbReference type="SUPFAM" id="SSF53383">
    <property type="entry name" value="PLP-dependent transferases"/>
    <property type="match status" value="1"/>
</dbReference>
<dbReference type="PROSITE" id="PS00599">
    <property type="entry name" value="AA_TRANSFER_CLASS_2"/>
    <property type="match status" value="1"/>
</dbReference>
<proteinExistence type="inferred from homology"/>